<organism>
    <name type="scientific">Mus musculus</name>
    <name type="common">Mouse</name>
    <dbReference type="NCBI Taxonomy" id="10090"/>
    <lineage>
        <taxon>Eukaryota</taxon>
        <taxon>Metazoa</taxon>
        <taxon>Chordata</taxon>
        <taxon>Craniata</taxon>
        <taxon>Vertebrata</taxon>
        <taxon>Euteleostomi</taxon>
        <taxon>Mammalia</taxon>
        <taxon>Eutheria</taxon>
        <taxon>Euarchontoglires</taxon>
        <taxon>Glires</taxon>
        <taxon>Rodentia</taxon>
        <taxon>Myomorpha</taxon>
        <taxon>Muroidea</taxon>
        <taxon>Muridae</taxon>
        <taxon>Murinae</taxon>
        <taxon>Mus</taxon>
        <taxon>Mus</taxon>
    </lineage>
</organism>
<dbReference type="EC" id="2.4.3.3" evidence="3"/>
<dbReference type="EMBL" id="X93999">
    <property type="protein sequence ID" value="CAA63821.1"/>
    <property type="molecule type" value="mRNA"/>
</dbReference>
<dbReference type="EMBL" id="X94000">
    <property type="protein sequence ID" value="CAA63822.1"/>
    <property type="molecule type" value="Genomic_DNA"/>
</dbReference>
<dbReference type="EMBL" id="AK004613">
    <property type="protein sequence ID" value="BAB23410.1"/>
    <property type="molecule type" value="mRNA"/>
</dbReference>
<dbReference type="EMBL" id="AK136381">
    <property type="protein sequence ID" value="BAE22955.1"/>
    <property type="molecule type" value="mRNA"/>
</dbReference>
<dbReference type="EMBL" id="BC010208">
    <property type="status" value="NOT_ANNOTATED_CDS"/>
    <property type="molecule type" value="mRNA"/>
</dbReference>
<dbReference type="CCDS" id="CCDS36379.1"/>
<dbReference type="RefSeq" id="NP_033206.2">
    <property type="nucleotide sequence ID" value="NM_009180.3"/>
</dbReference>
<dbReference type="SMR" id="P70277"/>
<dbReference type="FunCoup" id="P70277">
    <property type="interactions" value="47"/>
</dbReference>
<dbReference type="STRING" id="10090.ENSMUSP00000078501"/>
<dbReference type="CAZy" id="GT29">
    <property type="family name" value="Glycosyltransferase Family 29"/>
</dbReference>
<dbReference type="GlyCosmos" id="P70277">
    <property type="glycosylation" value="2 sites, No reported glycans"/>
</dbReference>
<dbReference type="GlyGen" id="P70277">
    <property type="glycosylation" value="2 sites"/>
</dbReference>
<dbReference type="PhosphoSitePlus" id="P70277"/>
<dbReference type="PaxDb" id="10090-ENSMUSP00000078501"/>
<dbReference type="ProteomicsDB" id="261359"/>
<dbReference type="Antibodypedia" id="32441">
    <property type="antibodies" value="107 antibodies from 21 providers"/>
</dbReference>
<dbReference type="DNASU" id="20446"/>
<dbReference type="Ensembl" id="ENSMUST00000079545.6">
    <property type="protein sequence ID" value="ENSMUSP00000078501.6"/>
    <property type="gene ID" value="ENSMUSG00000057286.7"/>
</dbReference>
<dbReference type="GeneID" id="20446"/>
<dbReference type="KEGG" id="mmu:20446"/>
<dbReference type="UCSC" id="uc007mma.1">
    <property type="organism name" value="mouse"/>
</dbReference>
<dbReference type="AGR" id="MGI:107553"/>
<dbReference type="CTD" id="10610"/>
<dbReference type="MGI" id="MGI:107553">
    <property type="gene designation" value="St6galnac2"/>
</dbReference>
<dbReference type="VEuPathDB" id="HostDB:ENSMUSG00000057286"/>
<dbReference type="eggNOG" id="KOG2692">
    <property type="taxonomic scope" value="Eukaryota"/>
</dbReference>
<dbReference type="GeneTree" id="ENSGT00940000160433"/>
<dbReference type="HOGENOM" id="CLU_032020_0_1_1"/>
<dbReference type="InParanoid" id="P70277"/>
<dbReference type="OMA" id="HWKRLCL"/>
<dbReference type="OrthoDB" id="10264956at2759"/>
<dbReference type="PhylomeDB" id="P70277"/>
<dbReference type="TreeFam" id="TF354325"/>
<dbReference type="Reactome" id="R-MMU-4085001">
    <property type="pathway name" value="Sialic acid metabolism"/>
</dbReference>
<dbReference type="Reactome" id="R-MMU-977068">
    <property type="pathway name" value="Termination of O-glycan biosynthesis"/>
</dbReference>
<dbReference type="UniPathway" id="UPA00378"/>
<dbReference type="BioGRID-ORCS" id="20446">
    <property type="hits" value="3 hits in 76 CRISPR screens"/>
</dbReference>
<dbReference type="ChiTaRS" id="St6galnac2">
    <property type="organism name" value="mouse"/>
</dbReference>
<dbReference type="PRO" id="PR:P70277"/>
<dbReference type="Proteomes" id="UP000000589">
    <property type="component" value="Chromosome 11"/>
</dbReference>
<dbReference type="RNAct" id="P70277">
    <property type="molecule type" value="protein"/>
</dbReference>
<dbReference type="Bgee" id="ENSMUSG00000057286">
    <property type="expression patterns" value="Expressed in seminiferous tubule of testis and 189 other cell types or tissues"/>
</dbReference>
<dbReference type="GO" id="GO:0000139">
    <property type="term" value="C:Golgi membrane"/>
    <property type="evidence" value="ECO:0007669"/>
    <property type="project" value="UniProtKB-SubCell"/>
</dbReference>
<dbReference type="GO" id="GO:0001665">
    <property type="term" value="F:alpha-N-acetylgalactosaminide alpha-2,6-sialyltransferase activity"/>
    <property type="evidence" value="ECO:0000250"/>
    <property type="project" value="UniProtKB"/>
</dbReference>
<dbReference type="GO" id="GO:0006493">
    <property type="term" value="P:protein O-linked glycosylation"/>
    <property type="evidence" value="ECO:0000250"/>
    <property type="project" value="UniProtKB"/>
</dbReference>
<dbReference type="GO" id="GO:1990743">
    <property type="term" value="P:protein sialylation"/>
    <property type="evidence" value="ECO:0000250"/>
    <property type="project" value="UniProtKB"/>
</dbReference>
<dbReference type="FunFam" id="3.90.1480.20:FF:000013">
    <property type="entry name" value="ST6 N-acetylgalactosaminide alpha-2,6-sialyltransferase 1"/>
    <property type="match status" value="1"/>
</dbReference>
<dbReference type="Gene3D" id="3.90.1480.20">
    <property type="entry name" value="Glycosyl transferase family 29"/>
    <property type="match status" value="1"/>
</dbReference>
<dbReference type="InterPro" id="IPR001675">
    <property type="entry name" value="Glyco_trans_29"/>
</dbReference>
<dbReference type="InterPro" id="IPR038578">
    <property type="entry name" value="GT29-like_sf"/>
</dbReference>
<dbReference type="InterPro" id="IPR012163">
    <property type="entry name" value="Sialyl_trans"/>
</dbReference>
<dbReference type="PANTHER" id="PTHR45941:SF5">
    <property type="entry name" value="ALPHA-N-ACETYLGALACTOSAMINIDE ALPHA-2,6-SIALYLTRANSFERASE 2"/>
    <property type="match status" value="1"/>
</dbReference>
<dbReference type="PANTHER" id="PTHR45941">
    <property type="entry name" value="ALPHA-N-ACETYLGALACTOSAMINIDE ALPHA-2,6-SIALYLTRANSFERASE 2-LIKE-RELATED"/>
    <property type="match status" value="1"/>
</dbReference>
<dbReference type="Pfam" id="PF00777">
    <property type="entry name" value="Glyco_transf_29"/>
    <property type="match status" value="1"/>
</dbReference>
<dbReference type="PIRSF" id="PIRSF005557">
    <property type="entry name" value="Sialyl_trans"/>
    <property type="match status" value="1"/>
</dbReference>
<sequence>MDLPRRWLFRMLLLVATSSGILLMLYSSAGQQSPETQVPARNMAYPRAFFDPKPPNSENRKSRLCQHSLSLAIQKDRRFRSLFDLSTPVLLWEGLFTQELWNNLSQHKVPYGWQGLSHEVIASTLRLLKSPESGELFGAPRKLPLSCIRCAVVGNGGILNGSRQGQKIDAHDYVFRLNGAITEGFERDVGTKTSFYGFTVNTMKNSLISYAKLGFTSVPQGQNLRYIFIPSSIRDYLMLRSAILGVPVPEGPDKGDRPHTYFGPETSASKFKLLHPDFISYLTERFLKSKLINTRFGDMYMPSTGALMLLTALHTCDQVSAYGFITNNYQKYSDHYFEREKKPLIFYANHDLSLEASLWRDLHNAGILWLYQR</sequence>
<feature type="chain" id="PRO_0000149273" description="Alpha-N-acetylgalactosaminide alpha-2,6-sialyltransferase 2">
    <location>
        <begin position="1"/>
        <end position="373"/>
    </location>
</feature>
<feature type="topological domain" description="Cytoplasmic" evidence="2">
    <location>
        <begin position="1"/>
        <end position="6"/>
    </location>
</feature>
<feature type="transmembrane region" description="Helical; Signal-anchor for type II membrane protein" evidence="2">
    <location>
        <begin position="7"/>
        <end position="27"/>
    </location>
</feature>
<feature type="topological domain" description="Lumenal" evidence="2">
    <location>
        <begin position="28"/>
        <end position="373"/>
    </location>
</feature>
<feature type="binding site" evidence="1">
    <location>
        <position position="155"/>
    </location>
    <ligand>
        <name>CMP-N-acetyl-beta-neuraminate</name>
        <dbReference type="ChEBI" id="CHEBI:57812"/>
    </ligand>
</feature>
<feature type="binding site" evidence="1">
    <location>
        <position position="178"/>
    </location>
    <ligand>
        <name>CMP-N-acetyl-beta-neuraminate</name>
        <dbReference type="ChEBI" id="CHEBI:57812"/>
    </ligand>
</feature>
<feature type="binding site" evidence="1">
    <location>
        <position position="303"/>
    </location>
    <ligand>
        <name>CMP-N-acetyl-beta-neuraminate</name>
        <dbReference type="ChEBI" id="CHEBI:57812"/>
    </ligand>
</feature>
<feature type="binding site" evidence="1">
    <location>
        <position position="335"/>
    </location>
    <ligand>
        <name>CMP-N-acetyl-beta-neuraminate</name>
        <dbReference type="ChEBI" id="CHEBI:57812"/>
    </ligand>
</feature>
<feature type="glycosylation site" description="N-linked (GlcNAc...) asparagine" evidence="2">
    <location>
        <position position="103"/>
    </location>
</feature>
<feature type="glycosylation site" description="N-linked (GlcNAc...) asparagine" evidence="2">
    <location>
        <position position="160"/>
    </location>
</feature>
<feature type="disulfide bond" evidence="1">
    <location>
        <begin position="65"/>
        <end position="147"/>
    </location>
</feature>
<feature type="disulfide bond" evidence="1">
    <location>
        <begin position="150"/>
        <end position="316"/>
    </location>
</feature>
<feature type="sequence conflict" description="In Ref. 1; CAA63821." evidence="4" ref="1">
    <original>G</original>
    <variation>A</variation>
    <location>
        <position position="184"/>
    </location>
</feature>
<proteinExistence type="evidence at protein level"/>
<gene>
    <name type="primary">St6galnac2</name>
    <name type="synonym">Siat7</name>
    <name type="synonym">Siat7b</name>
</gene>
<protein>
    <recommendedName>
        <fullName>Alpha-N-acetylgalactosaminide alpha-2,6-sialyltransferase 2</fullName>
        <ecNumber evidence="3">2.4.3.3</ecNumber>
    </recommendedName>
    <alternativeName>
        <fullName>Gal-beta-1,3-GalNAc alpha-2,6-sialyltransferase</fullName>
    </alternativeName>
    <alternativeName>
        <fullName>GalNAc alpha-2,6-sialyltransferase II</fullName>
    </alternativeName>
    <alternativeName>
        <fullName>ST6GalNAc II</fullName>
        <shortName>ST6GalNAcII</shortName>
    </alternativeName>
    <alternativeName>
        <fullName>Sialyltransferase 7B</fullName>
        <shortName>SIAT7-B</shortName>
    </alternativeName>
</protein>
<comment type="function">
    <text evidence="1 3">Catalyzes the transfer of N-acetylneuraminyl groups onto glycan chains in glycoproteins (PubMed:8662927). Conjugates sialic acid with an alpha-2-6 linkage to N-acetylgalactosamine (GalNAc) glycan chains linked to serine or threonine in glycoproteins. Sialylates alphaGalNAc- and Galbeta1-&gt;3GalNAc-O-Ser/Thr epitopes also known as Tn and T antigens.</text>
</comment>
<comment type="catalytic activity">
    <reaction evidence="3">
        <text>a beta-D-galactosyl-(1-&gt;3)-N-acetyl-alpha-D-galactosaminyl derivative + CMP-N-acetyl-beta-neuraminate = a beta-D-galactosyl-(1-&gt;3)-[N-acetyl-alpha-neuraminyl-(2-&gt;6)]-N-acetyl-alpha-D-galactosaminyl derivative + CMP + H(+)</text>
        <dbReference type="Rhea" id="RHEA:11136"/>
        <dbReference type="ChEBI" id="CHEBI:15378"/>
        <dbReference type="ChEBI" id="CHEBI:57812"/>
        <dbReference type="ChEBI" id="CHEBI:60377"/>
        <dbReference type="ChEBI" id="CHEBI:133470"/>
        <dbReference type="ChEBI" id="CHEBI:140764"/>
        <dbReference type="EC" id="2.4.3.3"/>
    </reaction>
    <physiologicalReaction direction="left-to-right" evidence="3">
        <dbReference type="Rhea" id="RHEA:11137"/>
    </physiologicalReaction>
</comment>
<comment type="catalytic activity">
    <reaction evidence="1">
        <text>a 3-O-[N-acetyl-alpha-D-galactosaminyl]-L-threonyl-[protein] + CMP-N-acetyl-beta-neuraminate = a 3-O-[N-acetyl-alpha-neuraminosyl-(2-&gt;6)-N-acetyl-alpha-D-galactosaminyl]-L-threonyl-[protein] + CMP + H(+)</text>
        <dbReference type="Rhea" id="RHEA:81643"/>
        <dbReference type="Rhea" id="RHEA-COMP:11689"/>
        <dbReference type="Rhea" id="RHEA-COMP:19720"/>
        <dbReference type="ChEBI" id="CHEBI:15378"/>
        <dbReference type="ChEBI" id="CHEBI:57812"/>
        <dbReference type="ChEBI" id="CHEBI:60377"/>
        <dbReference type="ChEBI" id="CHEBI:87075"/>
        <dbReference type="ChEBI" id="CHEBI:231970"/>
    </reaction>
    <physiologicalReaction direction="left-to-right" evidence="1">
        <dbReference type="Rhea" id="RHEA:81644"/>
    </physiologicalReaction>
</comment>
<comment type="catalytic activity">
    <reaction evidence="1">
        <text>a 3-O-[N-acetyl-alpha-neuraminyl-(2-&gt;3)-beta-D-galactosyl-(1-&gt;3)-N-acetyl-alpha-D-galactosaminyl]-L-threonyl-[protein] + CMP-N-acetyl-beta-neuraminate = a 3-O-{alpha-Neu5Ac-(2-&gt;3)-beta-D-Gal-(1-&gt;3)-[alpha-Neu5Ac-(2-&gt;6)]-alpha-D-GalNAc}-L-threonyl-[protein] + CMP + H(+)</text>
        <dbReference type="Rhea" id="RHEA:81659"/>
        <dbReference type="Rhea" id="RHEA-COMP:14417"/>
        <dbReference type="Rhea" id="RHEA-COMP:16763"/>
        <dbReference type="ChEBI" id="CHEBI:15378"/>
        <dbReference type="ChEBI" id="CHEBI:57812"/>
        <dbReference type="ChEBI" id="CHEBI:60377"/>
        <dbReference type="ChEBI" id="CHEBI:139598"/>
        <dbReference type="ChEBI" id="CHEBI:156398"/>
    </reaction>
    <physiologicalReaction direction="left-to-right" evidence="1">
        <dbReference type="Rhea" id="RHEA:81660"/>
    </physiologicalReaction>
</comment>
<comment type="pathway">
    <text evidence="3">Protein modification; protein glycosylation.</text>
</comment>
<comment type="subcellular location">
    <subcellularLocation>
        <location evidence="4">Golgi apparatus membrane</location>
        <topology evidence="4">Single-pass type II membrane protein</topology>
    </subcellularLocation>
</comment>
<comment type="tissue specificity">
    <text evidence="3">Highly expressed in lactating mammary gland and adult testis. Lower levels in kidney.</text>
</comment>
<comment type="similarity">
    <text evidence="4">Belongs to the glycosyltransferase 29 family.</text>
</comment>
<comment type="online information" name="Functional Glycomics Gateway - GTase">
    <link uri="http://www.functionalglycomics.org/glycomics/molecule/jsp/glycoEnzyme/viewGlycoEnzyme.jsp?gbpId=gt_mou_651"/>
    <text>ST6GalNAc II</text>
</comment>
<evidence type="ECO:0000250" key="1">
    <source>
        <dbReference type="UniProtKB" id="Q9UJ37"/>
    </source>
</evidence>
<evidence type="ECO:0000255" key="2"/>
<evidence type="ECO:0000269" key="3">
    <source>
    </source>
</evidence>
<evidence type="ECO:0000305" key="4"/>
<name>SIA7B_MOUSE</name>
<reference key="1">
    <citation type="journal article" date="1996" name="J. Biol. Chem.">
        <title>Molecular cloning and genomic analysis of mouse Galbeta1, 3GalNAc-specific GalNAc alpha2,6-sialyltransferase.</title>
        <authorList>
            <person name="Kurosawa N."/>
            <person name="Inoue M."/>
            <person name="Yoshida Y."/>
            <person name="Tsuji S."/>
        </authorList>
    </citation>
    <scope>NUCLEOTIDE SEQUENCE [GENOMIC DNA / MRNA]</scope>
    <scope>CATALYTIC ACTIVITY</scope>
    <scope>FUNCTION</scope>
    <scope>PATHWAY</scope>
    <scope>TISSUE SPECIFICITY</scope>
    <source>
        <strain>ICR</strain>
        <tissue>Submandibular gland</tissue>
    </source>
</reference>
<reference key="2">
    <citation type="journal article" date="2005" name="Science">
        <title>The transcriptional landscape of the mammalian genome.</title>
        <authorList>
            <person name="Carninci P."/>
            <person name="Kasukawa T."/>
            <person name="Katayama S."/>
            <person name="Gough J."/>
            <person name="Frith M.C."/>
            <person name="Maeda N."/>
            <person name="Oyama R."/>
            <person name="Ravasi T."/>
            <person name="Lenhard B."/>
            <person name="Wells C."/>
            <person name="Kodzius R."/>
            <person name="Shimokawa K."/>
            <person name="Bajic V.B."/>
            <person name="Brenner S.E."/>
            <person name="Batalov S."/>
            <person name="Forrest A.R."/>
            <person name="Zavolan M."/>
            <person name="Davis M.J."/>
            <person name="Wilming L.G."/>
            <person name="Aidinis V."/>
            <person name="Allen J.E."/>
            <person name="Ambesi-Impiombato A."/>
            <person name="Apweiler R."/>
            <person name="Aturaliya R.N."/>
            <person name="Bailey T.L."/>
            <person name="Bansal M."/>
            <person name="Baxter L."/>
            <person name="Beisel K.W."/>
            <person name="Bersano T."/>
            <person name="Bono H."/>
            <person name="Chalk A.M."/>
            <person name="Chiu K.P."/>
            <person name="Choudhary V."/>
            <person name="Christoffels A."/>
            <person name="Clutterbuck D.R."/>
            <person name="Crowe M.L."/>
            <person name="Dalla E."/>
            <person name="Dalrymple B.P."/>
            <person name="de Bono B."/>
            <person name="Della Gatta G."/>
            <person name="di Bernardo D."/>
            <person name="Down T."/>
            <person name="Engstrom P."/>
            <person name="Fagiolini M."/>
            <person name="Faulkner G."/>
            <person name="Fletcher C.F."/>
            <person name="Fukushima T."/>
            <person name="Furuno M."/>
            <person name="Futaki S."/>
            <person name="Gariboldi M."/>
            <person name="Georgii-Hemming P."/>
            <person name="Gingeras T.R."/>
            <person name="Gojobori T."/>
            <person name="Green R.E."/>
            <person name="Gustincich S."/>
            <person name="Harbers M."/>
            <person name="Hayashi Y."/>
            <person name="Hensch T.K."/>
            <person name="Hirokawa N."/>
            <person name="Hill D."/>
            <person name="Huminiecki L."/>
            <person name="Iacono M."/>
            <person name="Ikeo K."/>
            <person name="Iwama A."/>
            <person name="Ishikawa T."/>
            <person name="Jakt M."/>
            <person name="Kanapin A."/>
            <person name="Katoh M."/>
            <person name="Kawasawa Y."/>
            <person name="Kelso J."/>
            <person name="Kitamura H."/>
            <person name="Kitano H."/>
            <person name="Kollias G."/>
            <person name="Krishnan S.P."/>
            <person name="Kruger A."/>
            <person name="Kummerfeld S.K."/>
            <person name="Kurochkin I.V."/>
            <person name="Lareau L.F."/>
            <person name="Lazarevic D."/>
            <person name="Lipovich L."/>
            <person name="Liu J."/>
            <person name="Liuni S."/>
            <person name="McWilliam S."/>
            <person name="Madan Babu M."/>
            <person name="Madera M."/>
            <person name="Marchionni L."/>
            <person name="Matsuda H."/>
            <person name="Matsuzawa S."/>
            <person name="Miki H."/>
            <person name="Mignone F."/>
            <person name="Miyake S."/>
            <person name="Morris K."/>
            <person name="Mottagui-Tabar S."/>
            <person name="Mulder N."/>
            <person name="Nakano N."/>
            <person name="Nakauchi H."/>
            <person name="Ng P."/>
            <person name="Nilsson R."/>
            <person name="Nishiguchi S."/>
            <person name="Nishikawa S."/>
            <person name="Nori F."/>
            <person name="Ohara O."/>
            <person name="Okazaki Y."/>
            <person name="Orlando V."/>
            <person name="Pang K.C."/>
            <person name="Pavan W.J."/>
            <person name="Pavesi G."/>
            <person name="Pesole G."/>
            <person name="Petrovsky N."/>
            <person name="Piazza S."/>
            <person name="Reed J."/>
            <person name="Reid J.F."/>
            <person name="Ring B.Z."/>
            <person name="Ringwald M."/>
            <person name="Rost B."/>
            <person name="Ruan Y."/>
            <person name="Salzberg S.L."/>
            <person name="Sandelin A."/>
            <person name="Schneider C."/>
            <person name="Schoenbach C."/>
            <person name="Sekiguchi K."/>
            <person name="Semple C.A."/>
            <person name="Seno S."/>
            <person name="Sessa L."/>
            <person name="Sheng Y."/>
            <person name="Shibata Y."/>
            <person name="Shimada H."/>
            <person name="Shimada K."/>
            <person name="Silva D."/>
            <person name="Sinclair B."/>
            <person name="Sperling S."/>
            <person name="Stupka E."/>
            <person name="Sugiura K."/>
            <person name="Sultana R."/>
            <person name="Takenaka Y."/>
            <person name="Taki K."/>
            <person name="Tammoja K."/>
            <person name="Tan S.L."/>
            <person name="Tang S."/>
            <person name="Taylor M.S."/>
            <person name="Tegner J."/>
            <person name="Teichmann S.A."/>
            <person name="Ueda H.R."/>
            <person name="van Nimwegen E."/>
            <person name="Verardo R."/>
            <person name="Wei C.L."/>
            <person name="Yagi K."/>
            <person name="Yamanishi H."/>
            <person name="Zabarovsky E."/>
            <person name="Zhu S."/>
            <person name="Zimmer A."/>
            <person name="Hide W."/>
            <person name="Bult C."/>
            <person name="Grimmond S.M."/>
            <person name="Teasdale R.D."/>
            <person name="Liu E.T."/>
            <person name="Brusic V."/>
            <person name="Quackenbush J."/>
            <person name="Wahlestedt C."/>
            <person name="Mattick J.S."/>
            <person name="Hume D.A."/>
            <person name="Kai C."/>
            <person name="Sasaki D."/>
            <person name="Tomaru Y."/>
            <person name="Fukuda S."/>
            <person name="Kanamori-Katayama M."/>
            <person name="Suzuki M."/>
            <person name="Aoki J."/>
            <person name="Arakawa T."/>
            <person name="Iida J."/>
            <person name="Imamura K."/>
            <person name="Itoh M."/>
            <person name="Kato T."/>
            <person name="Kawaji H."/>
            <person name="Kawagashira N."/>
            <person name="Kawashima T."/>
            <person name="Kojima M."/>
            <person name="Kondo S."/>
            <person name="Konno H."/>
            <person name="Nakano K."/>
            <person name="Ninomiya N."/>
            <person name="Nishio T."/>
            <person name="Okada M."/>
            <person name="Plessy C."/>
            <person name="Shibata K."/>
            <person name="Shiraki T."/>
            <person name="Suzuki S."/>
            <person name="Tagami M."/>
            <person name="Waki K."/>
            <person name="Watahiki A."/>
            <person name="Okamura-Oho Y."/>
            <person name="Suzuki H."/>
            <person name="Kawai J."/>
            <person name="Hayashizaki Y."/>
        </authorList>
    </citation>
    <scope>NUCLEOTIDE SEQUENCE [LARGE SCALE MRNA]</scope>
    <source>
        <strain>C57BL/6J</strain>
        <tissue>Lung</tissue>
    </source>
</reference>
<reference key="3">
    <citation type="journal article" date="2004" name="Genome Res.">
        <title>The status, quality, and expansion of the NIH full-length cDNA project: the Mammalian Gene Collection (MGC).</title>
        <authorList>
            <consortium name="The MGC Project Team"/>
        </authorList>
    </citation>
    <scope>NUCLEOTIDE SEQUENCE [LARGE SCALE MRNA]</scope>
    <source>
        <strain>FVB/N</strain>
        <tissue>Mammary tumor</tissue>
    </source>
</reference>
<keyword id="KW-1015">Disulfide bond</keyword>
<keyword id="KW-0325">Glycoprotein</keyword>
<keyword id="KW-0328">Glycosyltransferase</keyword>
<keyword id="KW-0333">Golgi apparatus</keyword>
<keyword id="KW-0472">Membrane</keyword>
<keyword id="KW-1185">Reference proteome</keyword>
<keyword id="KW-0735">Signal-anchor</keyword>
<keyword id="KW-0808">Transferase</keyword>
<keyword id="KW-0812">Transmembrane</keyword>
<keyword id="KW-1133">Transmembrane helix</keyword>
<accession>P70277</accession>
<accession>Q3UWG0</accession>
<accession>Q9DC24</accession>